<comment type="function">
    <text evidence="2 3">Catalyzes the oxygenation of arachidonate to 5-hydroperoxyeicosatetraenoate (5-HPETE) followed by the dehydration to 5,6- epoxyeicosatetraenoate (Leukotriene A4/LTA4), the first two steps in the biosynthesis of leukotrienes, which are potent mediators of inflammation. Also catalyzes the oxygenation of arachidonate into 8-hydroperoxyicosatetraenoate (8-HPETE) and 12-hydroperoxyicosatetraenoate (12-HPETE). Displays lipoxin synthase activity being able to convert (15S)-HETE into a conjugate tetraene. Although arachidonate is the preferred substrate, this enzyme can also metabolize oxidized fatty acids derived from arachidonate such as (15S)-HETE, eicosapentaenoate (EPA) such as (18R)- and (18S)-HEPE or docosahexaenoate (DHA) which lead to the formation of specialized pro-resolving mediators (SPM) lipoxin and resolvins E and D respectively, therefore it participates in anti-inflammatory responses (By similarity). Oxidation of DHA directly inhibits endothelial cell proliferation and sprouting angiogenesis via peroxisome proliferator-activated receptor gamma (PPARgamma). It does not catalyze the oxygenation of linoleic acid and does not convert (5S)-HETE to lipoxin isomers. In addition to inflammatory processes, it participates in dendritic cell migration, wound healing through an antioxidant mechanism based on heme oxygenase-1 (HO-1) regulation expression, monocyte adhesion to the endothelium via ITGAM expression on monocytes. Moreover, it helps establish an adaptive humoral immunity by regulating primary resting B cells and follicular helper T cells and participates in the CD40-induced production of reactive oxygen species (ROS) after CD40 ligation in B cells through interaction with PIK3R1 that bridges ALOX5 with CD40. May also play a role in glucose homeostasis, regulation of insulin secretion and palmitic acid-induced insulin resistance via AMPK. Can regulate bone mineralization and fat cell differentiation increases in induced pluripotent stem cells (By similarity).</text>
</comment>
<comment type="catalytic activity">
    <reaction evidence="2">
        <text>(5Z,8Z,11Z,14Z)-eicosatetraenoate + O2 = leukotriene A4 + H2O</text>
        <dbReference type="Rhea" id="RHEA:32307"/>
        <dbReference type="ChEBI" id="CHEBI:15377"/>
        <dbReference type="ChEBI" id="CHEBI:15379"/>
        <dbReference type="ChEBI" id="CHEBI:32395"/>
        <dbReference type="ChEBI" id="CHEBI:57463"/>
        <dbReference type="EC" id="1.13.11.34"/>
    </reaction>
    <physiologicalReaction direction="left-to-right" evidence="2">
        <dbReference type="Rhea" id="RHEA:32308"/>
    </physiologicalReaction>
</comment>
<comment type="catalytic activity">
    <reaction evidence="2">
        <text>18-HEPE + O2 = (5S)-hydroperoxy-18-hydroxy-(7E,9E,11Z,14Z,16E)-eicosapentaenoate</text>
        <dbReference type="Rhea" id="RHEA:48860"/>
        <dbReference type="ChEBI" id="CHEBI:15379"/>
        <dbReference type="ChEBI" id="CHEBI:90825"/>
        <dbReference type="ChEBI" id="CHEBI:90826"/>
    </reaction>
    <physiologicalReaction direction="left-to-right" evidence="2">
        <dbReference type="Rhea" id="RHEA:48861"/>
    </physiologicalReaction>
</comment>
<comment type="catalytic activity">
    <reaction evidence="2">
        <text>(18R)-hydroxy-(5Z,8Z,11Z,14Z,16E)-eicosapentaenoate + O2 = (5S)-hydroperoxy-(18R)-hydroxy-(6E,8Z,11Z,14Z,16E)-eicosapentaenoate</text>
        <dbReference type="Rhea" id="RHEA:51968"/>
        <dbReference type="ChEBI" id="CHEBI:15379"/>
        <dbReference type="ChEBI" id="CHEBI:90818"/>
        <dbReference type="ChEBI" id="CHEBI:132218"/>
    </reaction>
    <physiologicalReaction direction="left-to-right" evidence="2">
        <dbReference type="Rhea" id="RHEA:51969"/>
    </physiologicalReaction>
</comment>
<comment type="catalytic activity">
    <reaction evidence="2">
        <text>(18S)-hydroxy-(5Z,8Z,11Z,14Z,16E)-eicosapentaenoate + O2 = (5S)-hydroperoxy-(18S)-hydroxy-(6E,8Z,11Z,14Z,16E)-eicosapentaenoate</text>
        <dbReference type="Rhea" id="RHEA:50204"/>
        <dbReference type="ChEBI" id="CHEBI:15379"/>
        <dbReference type="ChEBI" id="CHEBI:132083"/>
        <dbReference type="ChEBI" id="CHEBI:132091"/>
    </reaction>
    <physiologicalReaction direction="left-to-right" evidence="2">
        <dbReference type="Rhea" id="RHEA:50205"/>
    </physiologicalReaction>
</comment>
<comment type="catalytic activity">
    <reaction evidence="2">
        <text>(5S)-hydroperoxy-(18S)-hydroxy-(6E,8Z,11Z,14Z,16E)-eicosapentaenoate = (5S,6S)-epoxy-(18S)-hydroxy-(7E,9E,11Z,14Z,16E)-eicosapentaenoate + H2O</text>
        <dbReference type="Rhea" id="RHEA:39107"/>
        <dbReference type="ChEBI" id="CHEBI:15377"/>
        <dbReference type="ChEBI" id="CHEBI:132091"/>
        <dbReference type="ChEBI" id="CHEBI:134661"/>
    </reaction>
    <physiologicalReaction direction="left-to-right" evidence="2">
        <dbReference type="Rhea" id="RHEA:39108"/>
    </physiologicalReaction>
</comment>
<comment type="catalytic activity">
    <reaction evidence="2">
        <text>(5S)-hydroperoxy-(18R)-hydroxy-(6E,8Z,11Z,14Z,16E)-eicosapentaenoate = (5S,6S)-epoxy-(18R)-hydroxy-(7E,9E,11Z,14Z,16E)-eicosapentaenoate + H2O</text>
        <dbReference type="Rhea" id="RHEA:50268"/>
        <dbReference type="ChEBI" id="CHEBI:15377"/>
        <dbReference type="ChEBI" id="CHEBI:132218"/>
        <dbReference type="ChEBI" id="CHEBI:132219"/>
    </reaction>
    <physiologicalReaction direction="left-to-right" evidence="2">
        <dbReference type="Rhea" id="RHEA:50269"/>
    </physiologicalReaction>
</comment>
<comment type="catalytic activity">
    <reaction evidence="2">
        <text>(5S)-hydroperoxy-18-hydroxy-(7E,9E,11Z,14Z,16E)-eicosapentaenoate = (5S,6S)-epoxy-18-hydroxy-(7E,9E,11Z,14Z,16E)-eicosapentaenoate + H2O</text>
        <dbReference type="Rhea" id="RHEA:50844"/>
        <dbReference type="ChEBI" id="CHEBI:15377"/>
        <dbReference type="ChEBI" id="CHEBI:90826"/>
        <dbReference type="ChEBI" id="CHEBI:133812"/>
    </reaction>
    <physiologicalReaction direction="left-to-right" evidence="2">
        <dbReference type="Rhea" id="RHEA:50845"/>
    </physiologicalReaction>
</comment>
<comment type="catalytic activity">
    <reaction evidence="2">
        <text>(5Z,8Z,11Z,14Z)-eicosatetraenoate + O2 = (5S)-hydroperoxy-(6E,8Z,11Z,14Z)-eicosatetraenoate</text>
        <dbReference type="Rhea" id="RHEA:17485"/>
        <dbReference type="ChEBI" id="CHEBI:15379"/>
        <dbReference type="ChEBI" id="CHEBI:32395"/>
        <dbReference type="ChEBI" id="CHEBI:57450"/>
    </reaction>
    <physiologicalReaction direction="left-to-right" evidence="2">
        <dbReference type="Rhea" id="RHEA:17486"/>
    </physiologicalReaction>
</comment>
<comment type="catalytic activity">
    <reaction evidence="2">
        <text>(15S)-hydroxy-(5Z,8Z,11Z,13E)-eicosatetraenoate + O2 = (5S)-hydroperoxy-(15S)-hydroxy-(6E,8Z,11Z,13E)-eicosatetraenoate</text>
        <dbReference type="Rhea" id="RHEA:48624"/>
        <dbReference type="ChEBI" id="CHEBI:15379"/>
        <dbReference type="ChEBI" id="CHEBI:57409"/>
        <dbReference type="ChEBI" id="CHEBI:131564"/>
    </reaction>
    <physiologicalReaction direction="left-to-right" evidence="2">
        <dbReference type="Rhea" id="RHEA:48625"/>
    </physiologicalReaction>
</comment>
<comment type="catalytic activity">
    <reaction evidence="2">
        <text>(5S)-hydroperoxy-(6E,8Z,11Z,14Z)-eicosatetraenoate = leukotriene A4 + H2O</text>
        <dbReference type="Rhea" id="RHEA:17961"/>
        <dbReference type="ChEBI" id="CHEBI:15377"/>
        <dbReference type="ChEBI" id="CHEBI:57450"/>
        <dbReference type="ChEBI" id="CHEBI:57463"/>
    </reaction>
    <physiologicalReaction direction="left-to-right" evidence="2">
        <dbReference type="Rhea" id="RHEA:17962"/>
    </physiologicalReaction>
</comment>
<comment type="catalytic activity">
    <reaction evidence="2">
        <text>(5Z,8Z,11Z,14Z)-eicosatetraenoate + O2 = (8S)-hydroperoxy-(5Z,9E,11Z,14Z)-eicosatetraenoate</text>
        <dbReference type="Rhea" id="RHEA:38675"/>
        <dbReference type="ChEBI" id="CHEBI:15379"/>
        <dbReference type="ChEBI" id="CHEBI:32395"/>
        <dbReference type="ChEBI" id="CHEBI:75322"/>
    </reaction>
    <physiologicalReaction direction="left-to-right" evidence="2">
        <dbReference type="Rhea" id="RHEA:38676"/>
    </physiologicalReaction>
</comment>
<comment type="catalytic activity">
    <reaction evidence="2">
        <text>(5Z,8Z,11Z,14Z)-eicosatetraenoate + O2 = (12S)-hydroperoxy-(5Z,8Z,10E,14Z)-eicosatetraenoate</text>
        <dbReference type="Rhea" id="RHEA:10428"/>
        <dbReference type="ChEBI" id="CHEBI:15379"/>
        <dbReference type="ChEBI" id="CHEBI:32395"/>
        <dbReference type="ChEBI" id="CHEBI:57444"/>
    </reaction>
    <physiologicalReaction direction="left-to-right" evidence="2">
        <dbReference type="Rhea" id="RHEA:10429"/>
    </physiologicalReaction>
</comment>
<comment type="catalytic activity">
    <reaction evidence="2">
        <text>(5Z,8Z)-eicosadienoate + O2 = (5S)-hydroperoxy-(6E,8Z)-eicosadienoate</text>
        <dbReference type="Rhea" id="RHEA:62644"/>
        <dbReference type="ChEBI" id="CHEBI:15379"/>
        <dbReference type="ChEBI" id="CHEBI:145835"/>
        <dbReference type="ChEBI" id="CHEBI:145836"/>
    </reaction>
</comment>
<comment type="catalytic activity">
    <reaction evidence="2">
        <text>(12S)-hydroxy-(5Z,8Z,10E,14Z)-eicosatetraenoate + O2 = (5S)-hydroperoxy-(12S)-hydroxy-(6E,8Z,10E,14Z)-eicosatetraenoate</text>
        <dbReference type="Rhea" id="RHEA:62648"/>
        <dbReference type="ChEBI" id="CHEBI:15379"/>
        <dbReference type="ChEBI" id="CHEBI:90680"/>
        <dbReference type="ChEBI" id="CHEBI:145837"/>
    </reaction>
</comment>
<comment type="catalytic activity">
    <reaction evidence="2">
        <text>(5Z,8Z,11Z,14Z,17Z)-eicosapentaenoate + O2 = 5-hydroperoxy-(6E,8Z,11Z,14Z,17Z)-eicosapentaenoate</text>
        <dbReference type="Rhea" id="RHEA:62600"/>
        <dbReference type="ChEBI" id="CHEBI:15379"/>
        <dbReference type="ChEBI" id="CHEBI:58562"/>
        <dbReference type="ChEBI" id="CHEBI:145815"/>
    </reaction>
    <physiologicalReaction direction="left-to-right" evidence="2">
        <dbReference type="Rhea" id="RHEA:62601"/>
    </physiologicalReaction>
</comment>
<comment type="catalytic activity">
    <reaction evidence="2">
        <text>(4Z,7Z,10Z,13Z,16Z,19Z)-docosahexaenoate + O2 = (14S)-hydroperoxy-(4Z,7Z,10Z,12E,16Z,19Z)-docosahexaenoate</text>
        <dbReference type="Rhea" id="RHEA:41332"/>
        <dbReference type="ChEBI" id="CHEBI:15379"/>
        <dbReference type="ChEBI" id="CHEBI:77016"/>
        <dbReference type="ChEBI" id="CHEBI:78048"/>
    </reaction>
    <physiologicalReaction direction="left-to-right" evidence="2">
        <dbReference type="Rhea" id="RHEA:41333"/>
    </physiologicalReaction>
</comment>
<comment type="catalytic activity">
    <reaction evidence="2">
        <text>(4Z,7Z,10Z,13Z,16Z,19Z)-docosahexaenoate + O2 = (7S)-hydroperoxy-(4Z,8E,10Z,13Z,16Z,19Z)-docosahexaenoate</text>
        <dbReference type="Rhea" id="RHEA:64668"/>
        <dbReference type="ChEBI" id="CHEBI:15379"/>
        <dbReference type="ChEBI" id="CHEBI:77016"/>
        <dbReference type="ChEBI" id="CHEBI:156049"/>
    </reaction>
    <physiologicalReaction direction="left-to-right" evidence="2">
        <dbReference type="Rhea" id="RHEA:64669"/>
    </physiologicalReaction>
</comment>
<comment type="catalytic activity">
    <reaction evidence="2">
        <text>(4Z,7Z,10Z,13Z,16Z,19Z)-docosahexaenoate + O2 = (17S)-hydroperoxy-(4Z,7Z,10Z,13Z,15E,19Z)-docosahexaenoate</text>
        <dbReference type="Rhea" id="RHEA:50840"/>
        <dbReference type="ChEBI" id="CHEBI:15379"/>
        <dbReference type="ChEBI" id="CHEBI:77016"/>
        <dbReference type="ChEBI" id="CHEBI:133795"/>
    </reaction>
    <physiologicalReaction direction="left-to-right" evidence="2">
        <dbReference type="Rhea" id="RHEA:50841"/>
    </physiologicalReaction>
</comment>
<comment type="cofactor">
    <cofactor evidence="2 5">
        <name>Fe cation</name>
        <dbReference type="ChEBI" id="CHEBI:24875"/>
    </cofactor>
    <text evidence="2 5">Binds 1 Fe cation per subunit.</text>
</comment>
<comment type="pathway">
    <text evidence="2">Lipid metabolism; leukotriene A4 biosynthesis.</text>
</comment>
<comment type="subunit">
    <text evidence="2">Homodimer. Interacts with ALOX5AP and LTC4S. Interacts with COTL1, the interaction is required for stability and efficient catalytic activity. Interacts with PIK3R1; this interaction bridges ALOX5 with CD40 after CD40 ligation in B cells and leads to the production of reactive oxygen species (ROS). Interacts (via PLAT domain) with DICER1 (via Dicer dsRNA-binding fold domain); this interaction enhances arachidonate 5-lipoxygenase activity and modifies the miRNA precursor processing activity of DICER1.</text>
</comment>
<comment type="subcellular location">
    <subcellularLocation>
        <location evidence="2 3">Cytoplasm</location>
    </subcellularLocation>
    <subcellularLocation>
        <location evidence="2">Nucleus matrix</location>
    </subcellularLocation>
    <subcellularLocation>
        <location evidence="2">Nucleus membrane</location>
        <topology evidence="2">Peripheral membrane protein</topology>
    </subcellularLocation>
    <subcellularLocation>
        <location evidence="2">Cytoplasm</location>
        <location evidence="2">Perinuclear region</location>
    </subcellularLocation>
    <subcellularLocation>
        <location evidence="2">Cytoplasm</location>
        <location evidence="2">Cytosol</location>
    </subcellularLocation>
    <subcellularLocation>
        <location evidence="2">Nucleus envelope</location>
    </subcellularLocation>
    <subcellularLocation>
        <location evidence="2">Nucleus intermembrane space</location>
    </subcellularLocation>
    <text evidence="2">Shuttles between cytoplasm and nucleus. Found exclusively in the nucleus, when phosphorylated on Ser-272. Calcium binding promotes translocation from the cytosol and the nuclear matrix to the nuclear envelope and membrane association.</text>
</comment>
<comment type="PTM">
    <text evidence="2">Serine phosphorylation by MAPKAPK2 is stimulated by arachidonic acid. Phosphorylation on Ser-523 by PKA has an inhibitory effect. Phosphorylation on Ser-271 prevents export from the nucleus. Phosphorylation at Ser-523 is stimulated by 8-bromo-3',5'-cyclic AMP or prostaglandin E2.</text>
</comment>
<comment type="similarity">
    <text evidence="7">Belongs to the lipoxygenase family.</text>
</comment>
<sequence length="673" mass="77873">MPSYTVTVATGSQWFAGTDDYIYLSLIGSAGCSEKHLLDKAFYNDFERGAVDSYDVTVDEELGEIQLVRIEKRKYWLHDDWYLKYITLKTPTDYIEFPCYRWITGEGEIVLRDGRAKLARDDQIHILKQHRRKELEARQKQYRWMEWNPGFPLSIDAKCHKDLPRDIQFDSEKGVDFVLNYSKAMENLFINRFMHMFQSSWNDFADFEKIFVKISNTISERVKNHWQEDLMFGYQFLNGCNPVLIKRCRELPQKLPVTTEMVECSLERHLSLEQEVQEGNIFIVDYELLDGIDANKTDPCTHQFLAAPICLLYKNLANKIVPIAIQLNQAPGEKNPIFLPSDAKYDWLLAKIWVRSSDFHVHQTITHLLCTHLVSEVFGIAMYRQLPAVHPIFKLLVAHVRFTIAINTKAREQLICEYGLFDKANATGGGGHVQMVQRAVQDLTYSSLCFPEAIKARGMDSTEDIPYYFYRDDGLLVWEAIQSFTSEVVSIYYEDDQVVMEDQELQDFVKDVYVYGMRGRKASGFPKSIKSREKLSEYLTVVIFTASAQHAAVNFGQYDWCSWIPNAPPTMRAPPATAKGVVTIEQIVATLPDRGRSCWHLGAVWALSQFQENELFLGMYPEEHFIEKPVKEAMTRFRKNLEAIVNVIAERNKNKKLPYYYLSPDRIPNSVAI</sequence>
<accession>P51399</accession>
<reference key="1">
    <citation type="journal article" date="1996" name="Prostaglandins Leukot. Essent. Fatty Acids">
        <title>Cloning, sequencing and expression of a 5-lipoxygenase from Syrian hamster embryo fibroblasts.</title>
        <authorList>
            <person name="Kitzler J.W."/>
            <person name="Eling T.E."/>
        </authorList>
    </citation>
    <scope>NUCLEOTIDE SEQUENCE [MRNA]</scope>
    <source>
        <strain>Syrian</strain>
    </source>
</reference>
<protein>
    <recommendedName>
        <fullName evidence="2">Polyunsaturated fatty acid 5-lipoxygenase</fullName>
        <ecNumber evidence="2">1.13.11.-</ecNumber>
    </recommendedName>
    <alternativeName>
        <fullName evidence="2">Arachidonate 5-lipoxygenase</fullName>
        <shortName evidence="6">5-LO</shortName>
        <shortName evidence="6">5-lipoxygenase</shortName>
        <ecNumber evidence="2">1.13.11.34</ecNumber>
    </alternativeName>
</protein>
<organism>
    <name type="scientific">Mesocricetus auratus</name>
    <name type="common">Golden hamster</name>
    <dbReference type="NCBI Taxonomy" id="10036"/>
    <lineage>
        <taxon>Eukaryota</taxon>
        <taxon>Metazoa</taxon>
        <taxon>Chordata</taxon>
        <taxon>Craniata</taxon>
        <taxon>Vertebrata</taxon>
        <taxon>Euteleostomi</taxon>
        <taxon>Mammalia</taxon>
        <taxon>Eutheria</taxon>
        <taxon>Euarchontoglires</taxon>
        <taxon>Glires</taxon>
        <taxon>Rodentia</taxon>
        <taxon>Myomorpha</taxon>
        <taxon>Muroidea</taxon>
        <taxon>Cricetidae</taxon>
        <taxon>Cricetinae</taxon>
        <taxon>Mesocricetus</taxon>
    </lineage>
</organism>
<proteinExistence type="evidence at transcript level"/>
<keyword id="KW-0106">Calcium</keyword>
<keyword id="KW-0963">Cytoplasm</keyword>
<keyword id="KW-0223">Dioxygenase</keyword>
<keyword id="KW-0378">Hydrolase</keyword>
<keyword id="KW-0408">Iron</keyword>
<keyword id="KW-0434">Leukotriene biosynthesis</keyword>
<keyword id="KW-0443">Lipid metabolism</keyword>
<keyword id="KW-0472">Membrane</keyword>
<keyword id="KW-0479">Metal-binding</keyword>
<keyword id="KW-0539">Nucleus</keyword>
<keyword id="KW-0560">Oxidoreductase</keyword>
<keyword id="KW-0597">Phosphoprotein</keyword>
<keyword id="KW-1185">Reference proteome</keyword>
<gene>
    <name evidence="2" type="primary">ALOX5</name>
</gene>
<feature type="chain" id="PRO_0000220694" description="Polyunsaturated fatty acid 5-lipoxygenase">
    <location>
        <begin position="1"/>
        <end position="673"/>
    </location>
</feature>
<feature type="domain" description="PLAT" evidence="4">
    <location>
        <begin position="2"/>
        <end position="117"/>
    </location>
</feature>
<feature type="domain" description="Lipoxygenase" evidence="5">
    <location>
        <begin position="118"/>
        <end position="673"/>
    </location>
</feature>
<feature type="binding site" evidence="1">
    <location>
        <position position="17"/>
    </location>
    <ligand>
        <name>Ca(2+)</name>
        <dbReference type="ChEBI" id="CHEBI:29108"/>
        <label>1</label>
        <note>structural</note>
    </ligand>
</feature>
<feature type="binding site" evidence="1">
    <location>
        <position position="18"/>
    </location>
    <ligand>
        <name>Ca(2+)</name>
        <dbReference type="ChEBI" id="CHEBI:29108"/>
        <label>2</label>
        <note>structural</note>
    </ligand>
</feature>
<feature type="binding site" evidence="1">
    <location>
        <position position="19"/>
    </location>
    <ligand>
        <name>Ca(2+)</name>
        <dbReference type="ChEBI" id="CHEBI:29108"/>
        <label>2</label>
        <note>structural</note>
    </ligand>
</feature>
<feature type="binding site" evidence="1">
    <location>
        <position position="44"/>
    </location>
    <ligand>
        <name>Ca(2+)</name>
        <dbReference type="ChEBI" id="CHEBI:29108"/>
        <label>2</label>
        <note>structural</note>
    </ligand>
</feature>
<feature type="binding site" evidence="1">
    <location>
        <position position="45"/>
    </location>
    <ligand>
        <name>Ca(2+)</name>
        <dbReference type="ChEBI" id="CHEBI:29108"/>
        <label>2</label>
        <note>structural</note>
    </ligand>
</feature>
<feature type="binding site" evidence="1">
    <location>
        <position position="47"/>
    </location>
    <ligand>
        <name>Ca(2+)</name>
        <dbReference type="ChEBI" id="CHEBI:29108"/>
        <label>2</label>
        <note>structural</note>
    </ligand>
</feature>
<feature type="binding site" evidence="1">
    <location>
        <position position="79"/>
    </location>
    <ligand>
        <name>Ca(2+)</name>
        <dbReference type="ChEBI" id="CHEBI:29108"/>
        <label>1</label>
        <note>structural</note>
    </ligand>
</feature>
<feature type="binding site" evidence="1">
    <location>
        <position position="80"/>
    </location>
    <ligand>
        <name>Ca(2+)</name>
        <dbReference type="ChEBI" id="CHEBI:29108"/>
        <label>1</label>
        <note>structural</note>
    </ligand>
</feature>
<feature type="binding site" evidence="2 5">
    <location>
        <position position="367"/>
    </location>
    <ligand>
        <name>Fe cation</name>
        <dbReference type="ChEBI" id="CHEBI:24875"/>
        <note>catalytic</note>
    </ligand>
</feature>
<feature type="binding site" evidence="2 5">
    <location>
        <position position="372"/>
    </location>
    <ligand>
        <name>Fe cation</name>
        <dbReference type="ChEBI" id="CHEBI:24875"/>
        <note>catalytic</note>
    </ligand>
</feature>
<feature type="binding site" evidence="2 5">
    <location>
        <position position="550"/>
    </location>
    <ligand>
        <name>Fe cation</name>
        <dbReference type="ChEBI" id="CHEBI:24875"/>
        <note>catalytic</note>
    </ligand>
</feature>
<feature type="binding site" evidence="2 5">
    <location>
        <position position="554"/>
    </location>
    <ligand>
        <name>Fe cation</name>
        <dbReference type="ChEBI" id="CHEBI:24875"/>
        <note>catalytic</note>
    </ligand>
</feature>
<feature type="binding site" evidence="2 5">
    <location>
        <position position="673"/>
    </location>
    <ligand>
        <name>Fe cation</name>
        <dbReference type="ChEBI" id="CHEBI:24875"/>
        <note>catalytic</note>
    </ligand>
</feature>
<feature type="site" description="Essential for stabilizing binding to COTL1" evidence="1">
    <location>
        <position position="103"/>
    </location>
</feature>
<feature type="modified residue" description="Phosphoserine" evidence="2">
    <location>
        <position position="271"/>
    </location>
</feature>
<feature type="modified residue" description="Phosphoserine" evidence="2">
    <location>
        <position position="523"/>
    </location>
</feature>
<name>LOX5_MESAU</name>
<evidence type="ECO:0000250" key="1"/>
<evidence type="ECO:0000250" key="2">
    <source>
        <dbReference type="UniProtKB" id="P09917"/>
    </source>
</evidence>
<evidence type="ECO:0000250" key="3">
    <source>
        <dbReference type="UniProtKB" id="P48999"/>
    </source>
</evidence>
<evidence type="ECO:0000255" key="4">
    <source>
        <dbReference type="PROSITE-ProRule" id="PRU00152"/>
    </source>
</evidence>
<evidence type="ECO:0000255" key="5">
    <source>
        <dbReference type="PROSITE-ProRule" id="PRU00726"/>
    </source>
</evidence>
<evidence type="ECO:0000303" key="6">
    <source>
    </source>
</evidence>
<evidence type="ECO:0000305" key="7"/>
<dbReference type="EC" id="1.13.11.-" evidence="2"/>
<dbReference type="EC" id="1.13.11.34" evidence="2"/>
<dbReference type="EMBL" id="U43333">
    <property type="protein sequence ID" value="AAA85257.1"/>
    <property type="molecule type" value="mRNA"/>
</dbReference>
<dbReference type="RefSeq" id="NP_001268516.1">
    <property type="nucleotide sequence ID" value="NM_001281587.1"/>
</dbReference>
<dbReference type="SMR" id="P51399"/>
<dbReference type="STRING" id="10036.ENSMAUP00000021167"/>
<dbReference type="GeneID" id="101839970"/>
<dbReference type="KEGG" id="maua:101839970"/>
<dbReference type="CTD" id="240"/>
<dbReference type="eggNOG" id="ENOG502QQSP">
    <property type="taxonomic scope" value="Eukaryota"/>
</dbReference>
<dbReference type="OrthoDB" id="407298at2759"/>
<dbReference type="UniPathway" id="UPA00877"/>
<dbReference type="Proteomes" id="UP000189706">
    <property type="component" value="Unplaced"/>
</dbReference>
<dbReference type="GO" id="GO:0005829">
    <property type="term" value="C:cytosol"/>
    <property type="evidence" value="ECO:0000250"/>
    <property type="project" value="UniProtKB"/>
</dbReference>
<dbReference type="GO" id="GO:0005641">
    <property type="term" value="C:nuclear envelope lumen"/>
    <property type="evidence" value="ECO:0000250"/>
    <property type="project" value="UniProtKB"/>
</dbReference>
<dbReference type="GO" id="GO:0016363">
    <property type="term" value="C:nuclear matrix"/>
    <property type="evidence" value="ECO:0007669"/>
    <property type="project" value="UniProtKB-SubCell"/>
</dbReference>
<dbReference type="GO" id="GO:0031965">
    <property type="term" value="C:nuclear membrane"/>
    <property type="evidence" value="ECO:0000250"/>
    <property type="project" value="UniProtKB"/>
</dbReference>
<dbReference type="GO" id="GO:0048471">
    <property type="term" value="C:perinuclear region of cytoplasm"/>
    <property type="evidence" value="ECO:0000250"/>
    <property type="project" value="UniProtKB"/>
</dbReference>
<dbReference type="GO" id="GO:0004052">
    <property type="term" value="F:arachidonate 12(S)-lipoxygenase activity"/>
    <property type="evidence" value="ECO:0007669"/>
    <property type="project" value="RHEA"/>
</dbReference>
<dbReference type="GO" id="GO:0004051">
    <property type="term" value="F:arachidonate 5-lipoxygenase activity"/>
    <property type="evidence" value="ECO:0000250"/>
    <property type="project" value="UniProtKB"/>
</dbReference>
<dbReference type="GO" id="GO:0036403">
    <property type="term" value="F:arachidonate 8(S)-lipoxygenase activity"/>
    <property type="evidence" value="ECO:0007669"/>
    <property type="project" value="RHEA"/>
</dbReference>
<dbReference type="GO" id="GO:0016787">
    <property type="term" value="F:hydrolase activity"/>
    <property type="evidence" value="ECO:0007669"/>
    <property type="project" value="UniProtKB-KW"/>
</dbReference>
<dbReference type="GO" id="GO:0005506">
    <property type="term" value="F:iron ion binding"/>
    <property type="evidence" value="ECO:0000250"/>
    <property type="project" value="UniProtKB"/>
</dbReference>
<dbReference type="GO" id="GO:0036336">
    <property type="term" value="P:dendritic cell migration"/>
    <property type="evidence" value="ECO:0000250"/>
    <property type="project" value="UniProtKB"/>
</dbReference>
<dbReference type="GO" id="GO:0042593">
    <property type="term" value="P:glucose homeostasis"/>
    <property type="evidence" value="ECO:0000250"/>
    <property type="project" value="UniProtKB"/>
</dbReference>
<dbReference type="GO" id="GO:0006959">
    <property type="term" value="P:humoral immune response"/>
    <property type="evidence" value="ECO:0000250"/>
    <property type="project" value="UniProtKB"/>
</dbReference>
<dbReference type="GO" id="GO:0002232">
    <property type="term" value="P:leukocyte chemotaxis involved in inflammatory response"/>
    <property type="evidence" value="ECO:0000250"/>
    <property type="project" value="UniProtKB"/>
</dbReference>
<dbReference type="GO" id="GO:0002523">
    <property type="term" value="P:leukocyte migration involved in inflammatory response"/>
    <property type="evidence" value="ECO:0000250"/>
    <property type="project" value="UniProtKB"/>
</dbReference>
<dbReference type="GO" id="GO:1901753">
    <property type="term" value="P:leukotriene A4 biosynthetic process"/>
    <property type="evidence" value="ECO:0000250"/>
    <property type="project" value="UniProtKB"/>
</dbReference>
<dbReference type="GO" id="GO:0019370">
    <property type="term" value="P:leukotriene biosynthetic process"/>
    <property type="evidence" value="ECO:0000250"/>
    <property type="project" value="UniProtKB"/>
</dbReference>
<dbReference type="GO" id="GO:0034440">
    <property type="term" value="P:lipid oxidation"/>
    <property type="evidence" value="ECO:0007669"/>
    <property type="project" value="InterPro"/>
</dbReference>
<dbReference type="GO" id="GO:2001301">
    <property type="term" value="P:lipoxin biosynthetic process"/>
    <property type="evidence" value="ECO:0000250"/>
    <property type="project" value="UniProtKB"/>
</dbReference>
<dbReference type="GO" id="GO:0016525">
    <property type="term" value="P:negative regulation of angiogenesis"/>
    <property type="evidence" value="ECO:0000250"/>
    <property type="project" value="UniProtKB"/>
</dbReference>
<dbReference type="GO" id="GO:0001937">
    <property type="term" value="P:negative regulation of endothelial cell proliferation"/>
    <property type="evidence" value="ECO:0000250"/>
    <property type="project" value="UniProtKB"/>
</dbReference>
<dbReference type="GO" id="GO:0050728">
    <property type="term" value="P:negative regulation of inflammatory response"/>
    <property type="evidence" value="ECO:0000250"/>
    <property type="project" value="UniProtKB"/>
</dbReference>
<dbReference type="GO" id="GO:1903573">
    <property type="term" value="P:negative regulation of response to endoplasmic reticulum stress"/>
    <property type="evidence" value="ECO:0000250"/>
    <property type="project" value="UniProtKB"/>
</dbReference>
<dbReference type="GO" id="GO:1903671">
    <property type="term" value="P:negative regulation of sprouting angiogenesis"/>
    <property type="evidence" value="ECO:0000250"/>
    <property type="project" value="UniProtKB"/>
</dbReference>
<dbReference type="GO" id="GO:0061044">
    <property type="term" value="P:negative regulation of vascular wound healing"/>
    <property type="evidence" value="ECO:0000250"/>
    <property type="project" value="UniProtKB"/>
</dbReference>
<dbReference type="GO" id="GO:0061045">
    <property type="term" value="P:negative regulation of wound healing"/>
    <property type="evidence" value="ECO:0000250"/>
    <property type="project" value="UniProtKB"/>
</dbReference>
<dbReference type="GO" id="GO:0030501">
    <property type="term" value="P:positive regulation of bone mineralization"/>
    <property type="evidence" value="ECO:0000250"/>
    <property type="project" value="UniProtKB"/>
</dbReference>
<dbReference type="GO" id="GO:1904999">
    <property type="term" value="P:positive regulation of leukocyte adhesion to arterial endothelial cell"/>
    <property type="evidence" value="ECO:0000250"/>
    <property type="project" value="UniProtKB"/>
</dbReference>
<dbReference type="GO" id="GO:1900407">
    <property type="term" value="P:regulation of cellular response to oxidative stress"/>
    <property type="evidence" value="ECO:0000250"/>
    <property type="project" value="UniProtKB"/>
</dbReference>
<dbReference type="GO" id="GO:1900015">
    <property type="term" value="P:regulation of cytokine production involved in inflammatory response"/>
    <property type="evidence" value="ECO:0000250"/>
    <property type="project" value="UniProtKB"/>
</dbReference>
<dbReference type="GO" id="GO:0045598">
    <property type="term" value="P:regulation of fat cell differentiation"/>
    <property type="evidence" value="ECO:0000250"/>
    <property type="project" value="UniProtKB"/>
</dbReference>
<dbReference type="GO" id="GO:0050727">
    <property type="term" value="P:regulation of inflammatory response"/>
    <property type="evidence" value="ECO:0000250"/>
    <property type="project" value="UniProtKB"/>
</dbReference>
<dbReference type="GO" id="GO:0106014">
    <property type="term" value="P:regulation of inflammatory response to wounding"/>
    <property type="evidence" value="ECO:0000250"/>
    <property type="project" value="UniProtKB"/>
</dbReference>
<dbReference type="GO" id="GO:0050796">
    <property type="term" value="P:regulation of insulin secretion"/>
    <property type="evidence" value="ECO:0000250"/>
    <property type="project" value="UniProtKB"/>
</dbReference>
<dbReference type="GO" id="GO:1903426">
    <property type="term" value="P:regulation of reactive oxygen species biosynthetic process"/>
    <property type="evidence" value="ECO:0000250"/>
    <property type="project" value="UniProtKB"/>
</dbReference>
<dbReference type="CDD" id="cd01753">
    <property type="entry name" value="PLAT_LOX"/>
    <property type="match status" value="1"/>
</dbReference>
<dbReference type="FunFam" id="1.20.245.10:FF:000001">
    <property type="entry name" value="Arachidonate 5-lipoxygenase a"/>
    <property type="match status" value="1"/>
</dbReference>
<dbReference type="FunFam" id="2.60.60.20:FF:000002">
    <property type="entry name" value="Arachidonate 5-lipoxygenase a"/>
    <property type="match status" value="1"/>
</dbReference>
<dbReference type="FunFam" id="3.10.450.60:FF:000003">
    <property type="entry name" value="Arachidonate 5-lipoxygenase a"/>
    <property type="match status" value="1"/>
</dbReference>
<dbReference type="Gene3D" id="3.10.450.60">
    <property type="match status" value="1"/>
</dbReference>
<dbReference type="Gene3D" id="1.20.245.10">
    <property type="entry name" value="Lipoxygenase-1, Domain 5"/>
    <property type="match status" value="1"/>
</dbReference>
<dbReference type="Gene3D" id="2.60.60.20">
    <property type="entry name" value="PLAT/LH2 domain"/>
    <property type="match status" value="1"/>
</dbReference>
<dbReference type="InterPro" id="IPR000907">
    <property type="entry name" value="LipOase"/>
</dbReference>
<dbReference type="InterPro" id="IPR013819">
    <property type="entry name" value="LipOase_C"/>
</dbReference>
<dbReference type="InterPro" id="IPR036226">
    <property type="entry name" value="LipOase_C_sf"/>
</dbReference>
<dbReference type="InterPro" id="IPR020834">
    <property type="entry name" value="LipOase_CS"/>
</dbReference>
<dbReference type="InterPro" id="IPR020833">
    <property type="entry name" value="LipOase_Fe_BS"/>
</dbReference>
<dbReference type="InterPro" id="IPR001885">
    <property type="entry name" value="LipOase_mml"/>
</dbReference>
<dbReference type="InterPro" id="IPR001024">
    <property type="entry name" value="PLAT/LH2_dom"/>
</dbReference>
<dbReference type="InterPro" id="IPR036392">
    <property type="entry name" value="PLAT/LH2_dom_sf"/>
</dbReference>
<dbReference type="InterPro" id="IPR042062">
    <property type="entry name" value="PLAT_LOX_verte"/>
</dbReference>
<dbReference type="PANTHER" id="PTHR11771">
    <property type="entry name" value="LIPOXYGENASE"/>
    <property type="match status" value="1"/>
</dbReference>
<dbReference type="Pfam" id="PF00305">
    <property type="entry name" value="Lipoxygenase"/>
    <property type="match status" value="1"/>
</dbReference>
<dbReference type="Pfam" id="PF01477">
    <property type="entry name" value="PLAT"/>
    <property type="match status" value="1"/>
</dbReference>
<dbReference type="PRINTS" id="PR00087">
    <property type="entry name" value="LIPOXYGENASE"/>
</dbReference>
<dbReference type="PRINTS" id="PR00467">
    <property type="entry name" value="MAMLPOXGNASE"/>
</dbReference>
<dbReference type="SMART" id="SM00308">
    <property type="entry name" value="LH2"/>
    <property type="match status" value="1"/>
</dbReference>
<dbReference type="SUPFAM" id="SSF49723">
    <property type="entry name" value="Lipase/lipooxygenase domain (PLAT/LH2 domain)"/>
    <property type="match status" value="1"/>
</dbReference>
<dbReference type="SUPFAM" id="SSF48484">
    <property type="entry name" value="Lipoxigenase"/>
    <property type="match status" value="1"/>
</dbReference>
<dbReference type="PROSITE" id="PS00711">
    <property type="entry name" value="LIPOXYGENASE_1"/>
    <property type="match status" value="1"/>
</dbReference>
<dbReference type="PROSITE" id="PS00081">
    <property type="entry name" value="LIPOXYGENASE_2"/>
    <property type="match status" value="1"/>
</dbReference>
<dbReference type="PROSITE" id="PS51393">
    <property type="entry name" value="LIPOXYGENASE_3"/>
    <property type="match status" value="1"/>
</dbReference>
<dbReference type="PROSITE" id="PS50095">
    <property type="entry name" value="PLAT"/>
    <property type="match status" value="1"/>
</dbReference>